<sequence length="273" mass="30526">MALKVYNSVTQSLRQVVQVDKSELWKGRPLKKLAKGITKTGGRNNLGRITIWHRGKGHKQLYRMIDFKRRVFDIYATVERIEYDPNRTAFIALIKYDDGKFSYILSPRNLNVGDKIISSDKAEINVGNCLPLEVIPVGTIIHNIEIKPGKGGQVARSAGTYAVLLNKDSGYAQIKFRSGEVRRISLASRATVGSVSNIDHKNISYGKAGRVRWLGRRPVVRGVAMNPVDHPHGGGEGKTSGGRHPVTPWGKKTKGKKTRKNKFTSRFIVKRRN</sequence>
<keyword id="KW-0687">Ribonucleoprotein</keyword>
<keyword id="KW-0689">Ribosomal protein</keyword>
<keyword id="KW-0694">RNA-binding</keyword>
<keyword id="KW-0699">rRNA-binding</keyword>
<evidence type="ECO:0000255" key="1">
    <source>
        <dbReference type="HAMAP-Rule" id="MF_01320"/>
    </source>
</evidence>
<evidence type="ECO:0000256" key="2">
    <source>
        <dbReference type="SAM" id="MobiDB-lite"/>
    </source>
</evidence>
<evidence type="ECO:0000305" key="3"/>
<comment type="function">
    <text evidence="1">One of the primary rRNA binding proteins. Required for association of the 30S and 50S subunits to form the 70S ribosome, for tRNA binding and peptide bond formation. It has been suggested to have peptidyltransferase activity; this is somewhat controversial. Makes several contacts with the 16S rRNA in the 70S ribosome.</text>
</comment>
<comment type="subunit">
    <text evidence="1">Part of the 50S ribosomal subunit. Forms a bridge to the 30S subunit in the 70S ribosome.</text>
</comment>
<comment type="similarity">
    <text evidence="1">Belongs to the universal ribosomal protein uL2 family.</text>
</comment>
<organism>
    <name type="scientific">Orientia tsutsugamushi (strain Ikeda)</name>
    <name type="common">Rickettsia tsutsugamushi</name>
    <dbReference type="NCBI Taxonomy" id="334380"/>
    <lineage>
        <taxon>Bacteria</taxon>
        <taxon>Pseudomonadati</taxon>
        <taxon>Pseudomonadota</taxon>
        <taxon>Alphaproteobacteria</taxon>
        <taxon>Rickettsiales</taxon>
        <taxon>Rickettsiaceae</taxon>
        <taxon>Rickettsieae</taxon>
        <taxon>Orientia</taxon>
    </lineage>
</organism>
<feature type="chain" id="PRO_1000141591" description="Large ribosomal subunit protein uL2">
    <location>
        <begin position="1"/>
        <end position="273"/>
    </location>
</feature>
<feature type="region of interest" description="Disordered" evidence="2">
    <location>
        <begin position="224"/>
        <end position="260"/>
    </location>
</feature>
<feature type="compositionally biased region" description="Basic residues" evidence="2">
    <location>
        <begin position="251"/>
        <end position="260"/>
    </location>
</feature>
<protein>
    <recommendedName>
        <fullName evidence="1">Large ribosomal subunit protein uL2</fullName>
    </recommendedName>
    <alternativeName>
        <fullName evidence="3">50S ribosomal protein L2</fullName>
    </alternativeName>
</protein>
<accession>B3CT08</accession>
<dbReference type="EMBL" id="AP008981">
    <property type="protein sequence ID" value="BAG40505.1"/>
    <property type="molecule type" value="Genomic_DNA"/>
</dbReference>
<dbReference type="RefSeq" id="WP_012461609.1">
    <property type="nucleotide sequence ID" value="NC_010793.1"/>
</dbReference>
<dbReference type="SMR" id="B3CT08"/>
<dbReference type="KEGG" id="ott:OTT_1047"/>
<dbReference type="HOGENOM" id="CLU_036235_2_1_5"/>
<dbReference type="OrthoDB" id="9778722at2"/>
<dbReference type="Proteomes" id="UP000001033">
    <property type="component" value="Chromosome"/>
</dbReference>
<dbReference type="GO" id="GO:0015934">
    <property type="term" value="C:large ribosomal subunit"/>
    <property type="evidence" value="ECO:0007669"/>
    <property type="project" value="InterPro"/>
</dbReference>
<dbReference type="GO" id="GO:0019843">
    <property type="term" value="F:rRNA binding"/>
    <property type="evidence" value="ECO:0007669"/>
    <property type="project" value="UniProtKB-UniRule"/>
</dbReference>
<dbReference type="GO" id="GO:0003735">
    <property type="term" value="F:structural constituent of ribosome"/>
    <property type="evidence" value="ECO:0007669"/>
    <property type="project" value="InterPro"/>
</dbReference>
<dbReference type="GO" id="GO:0016740">
    <property type="term" value="F:transferase activity"/>
    <property type="evidence" value="ECO:0007669"/>
    <property type="project" value="InterPro"/>
</dbReference>
<dbReference type="GO" id="GO:0006412">
    <property type="term" value="P:translation"/>
    <property type="evidence" value="ECO:0007669"/>
    <property type="project" value="UniProtKB-UniRule"/>
</dbReference>
<dbReference type="FunFam" id="2.30.30.30:FF:000001">
    <property type="entry name" value="50S ribosomal protein L2"/>
    <property type="match status" value="1"/>
</dbReference>
<dbReference type="FunFam" id="4.10.950.10:FF:000001">
    <property type="entry name" value="50S ribosomal protein L2"/>
    <property type="match status" value="1"/>
</dbReference>
<dbReference type="Gene3D" id="2.30.30.30">
    <property type="match status" value="1"/>
</dbReference>
<dbReference type="Gene3D" id="2.40.50.140">
    <property type="entry name" value="Nucleic acid-binding proteins"/>
    <property type="match status" value="1"/>
</dbReference>
<dbReference type="Gene3D" id="4.10.950.10">
    <property type="entry name" value="Ribosomal protein L2, domain 3"/>
    <property type="match status" value="1"/>
</dbReference>
<dbReference type="HAMAP" id="MF_01320_B">
    <property type="entry name" value="Ribosomal_uL2_B"/>
    <property type="match status" value="1"/>
</dbReference>
<dbReference type="InterPro" id="IPR012340">
    <property type="entry name" value="NA-bd_OB-fold"/>
</dbReference>
<dbReference type="InterPro" id="IPR014722">
    <property type="entry name" value="Rib_uL2_dom2"/>
</dbReference>
<dbReference type="InterPro" id="IPR002171">
    <property type="entry name" value="Ribosomal_uL2"/>
</dbReference>
<dbReference type="InterPro" id="IPR005880">
    <property type="entry name" value="Ribosomal_uL2_bac/org-type"/>
</dbReference>
<dbReference type="InterPro" id="IPR022669">
    <property type="entry name" value="Ribosomal_uL2_C"/>
</dbReference>
<dbReference type="InterPro" id="IPR022671">
    <property type="entry name" value="Ribosomal_uL2_CS"/>
</dbReference>
<dbReference type="InterPro" id="IPR014726">
    <property type="entry name" value="Ribosomal_uL2_dom3"/>
</dbReference>
<dbReference type="InterPro" id="IPR022666">
    <property type="entry name" value="Ribosomal_uL2_RNA-bd_dom"/>
</dbReference>
<dbReference type="InterPro" id="IPR008991">
    <property type="entry name" value="Translation_prot_SH3-like_sf"/>
</dbReference>
<dbReference type="NCBIfam" id="TIGR01171">
    <property type="entry name" value="rplB_bact"/>
    <property type="match status" value="1"/>
</dbReference>
<dbReference type="PANTHER" id="PTHR13691:SF5">
    <property type="entry name" value="LARGE RIBOSOMAL SUBUNIT PROTEIN UL2M"/>
    <property type="match status" value="1"/>
</dbReference>
<dbReference type="PANTHER" id="PTHR13691">
    <property type="entry name" value="RIBOSOMAL PROTEIN L2"/>
    <property type="match status" value="1"/>
</dbReference>
<dbReference type="Pfam" id="PF00181">
    <property type="entry name" value="Ribosomal_L2"/>
    <property type="match status" value="1"/>
</dbReference>
<dbReference type="Pfam" id="PF03947">
    <property type="entry name" value="Ribosomal_L2_C"/>
    <property type="match status" value="1"/>
</dbReference>
<dbReference type="PIRSF" id="PIRSF002158">
    <property type="entry name" value="Ribosomal_L2"/>
    <property type="match status" value="1"/>
</dbReference>
<dbReference type="SMART" id="SM01383">
    <property type="entry name" value="Ribosomal_L2"/>
    <property type="match status" value="1"/>
</dbReference>
<dbReference type="SMART" id="SM01382">
    <property type="entry name" value="Ribosomal_L2_C"/>
    <property type="match status" value="1"/>
</dbReference>
<dbReference type="SUPFAM" id="SSF50249">
    <property type="entry name" value="Nucleic acid-binding proteins"/>
    <property type="match status" value="1"/>
</dbReference>
<dbReference type="SUPFAM" id="SSF50104">
    <property type="entry name" value="Translation proteins SH3-like domain"/>
    <property type="match status" value="1"/>
</dbReference>
<dbReference type="PROSITE" id="PS00467">
    <property type="entry name" value="RIBOSOMAL_L2"/>
    <property type="match status" value="1"/>
</dbReference>
<name>RL2_ORITI</name>
<reference key="1">
    <citation type="journal article" date="2008" name="DNA Res.">
        <title>The whole-genome sequencing of the obligate intracellular bacterium Orientia tsutsugamushi revealed massive gene amplification during reductive genome evolution.</title>
        <authorList>
            <person name="Nakayama K."/>
            <person name="Yamashita A."/>
            <person name="Kurokawa K."/>
            <person name="Morimoto T."/>
            <person name="Ogawa M."/>
            <person name="Fukuhara M."/>
            <person name="Urakami H."/>
            <person name="Ohnishi M."/>
            <person name="Uchiyama I."/>
            <person name="Ogura Y."/>
            <person name="Ooka T."/>
            <person name="Oshima K."/>
            <person name="Tamura A."/>
            <person name="Hattori M."/>
            <person name="Hayashi T."/>
        </authorList>
    </citation>
    <scope>NUCLEOTIDE SEQUENCE [LARGE SCALE GENOMIC DNA]</scope>
    <source>
        <strain>Ikeda</strain>
    </source>
</reference>
<gene>
    <name evidence="1" type="primary">rplB</name>
    <name type="ordered locus">OTT_1047</name>
</gene>
<proteinExistence type="inferred from homology"/>